<organism>
    <name type="scientific">Salmonella choleraesuis (strain SC-B67)</name>
    <dbReference type="NCBI Taxonomy" id="321314"/>
    <lineage>
        <taxon>Bacteria</taxon>
        <taxon>Pseudomonadati</taxon>
        <taxon>Pseudomonadota</taxon>
        <taxon>Gammaproteobacteria</taxon>
        <taxon>Enterobacterales</taxon>
        <taxon>Enterobacteriaceae</taxon>
        <taxon>Salmonella</taxon>
    </lineage>
</organism>
<accession>Q57J48</accession>
<protein>
    <recommendedName>
        <fullName evidence="1">Large ribosomal subunit protein uL18</fullName>
    </recommendedName>
    <alternativeName>
        <fullName evidence="2">50S ribosomal protein L18</fullName>
    </alternativeName>
</protein>
<comment type="function">
    <text evidence="1">This is one of the proteins that bind and probably mediate the attachment of the 5S RNA into the large ribosomal subunit, where it forms part of the central protuberance.</text>
</comment>
<comment type="subunit">
    <text evidence="1">Part of the 50S ribosomal subunit; part of the 5S rRNA/L5/L18/L25 subcomplex. Contacts the 5S and 23S rRNAs.</text>
</comment>
<comment type="similarity">
    <text evidence="1">Belongs to the universal ribosomal protein uL18 family.</text>
</comment>
<proteinExistence type="inferred from homology"/>
<dbReference type="EMBL" id="AE017220">
    <property type="protein sequence ID" value="AAX67264.1"/>
    <property type="molecule type" value="Genomic_DNA"/>
</dbReference>
<dbReference type="RefSeq" id="WP_000358956.1">
    <property type="nucleotide sequence ID" value="NC_006905.1"/>
</dbReference>
<dbReference type="SMR" id="Q57J48"/>
<dbReference type="GeneID" id="93035747"/>
<dbReference type="KEGG" id="sec:SCH_3358"/>
<dbReference type="HOGENOM" id="CLU_098841_0_1_6"/>
<dbReference type="Proteomes" id="UP000000538">
    <property type="component" value="Chromosome"/>
</dbReference>
<dbReference type="GO" id="GO:0022625">
    <property type="term" value="C:cytosolic large ribosomal subunit"/>
    <property type="evidence" value="ECO:0007669"/>
    <property type="project" value="TreeGrafter"/>
</dbReference>
<dbReference type="GO" id="GO:0008097">
    <property type="term" value="F:5S rRNA binding"/>
    <property type="evidence" value="ECO:0007669"/>
    <property type="project" value="TreeGrafter"/>
</dbReference>
<dbReference type="GO" id="GO:0003735">
    <property type="term" value="F:structural constituent of ribosome"/>
    <property type="evidence" value="ECO:0007669"/>
    <property type="project" value="InterPro"/>
</dbReference>
<dbReference type="GO" id="GO:0006412">
    <property type="term" value="P:translation"/>
    <property type="evidence" value="ECO:0007669"/>
    <property type="project" value="UniProtKB-UniRule"/>
</dbReference>
<dbReference type="CDD" id="cd00432">
    <property type="entry name" value="Ribosomal_L18_L5e"/>
    <property type="match status" value="1"/>
</dbReference>
<dbReference type="FunFam" id="3.30.420.100:FF:000001">
    <property type="entry name" value="50S ribosomal protein L18"/>
    <property type="match status" value="1"/>
</dbReference>
<dbReference type="Gene3D" id="3.30.420.100">
    <property type="match status" value="1"/>
</dbReference>
<dbReference type="HAMAP" id="MF_01337_B">
    <property type="entry name" value="Ribosomal_uL18_B"/>
    <property type="match status" value="1"/>
</dbReference>
<dbReference type="InterPro" id="IPR004389">
    <property type="entry name" value="Ribosomal_uL18_bac-type"/>
</dbReference>
<dbReference type="InterPro" id="IPR005484">
    <property type="entry name" value="Ribosomal_uL18_bac/euk"/>
</dbReference>
<dbReference type="NCBIfam" id="TIGR00060">
    <property type="entry name" value="L18_bact"/>
    <property type="match status" value="1"/>
</dbReference>
<dbReference type="PANTHER" id="PTHR12899">
    <property type="entry name" value="39S RIBOSOMAL PROTEIN L18, MITOCHONDRIAL"/>
    <property type="match status" value="1"/>
</dbReference>
<dbReference type="PANTHER" id="PTHR12899:SF3">
    <property type="entry name" value="LARGE RIBOSOMAL SUBUNIT PROTEIN UL18M"/>
    <property type="match status" value="1"/>
</dbReference>
<dbReference type="Pfam" id="PF00861">
    <property type="entry name" value="Ribosomal_L18p"/>
    <property type="match status" value="1"/>
</dbReference>
<dbReference type="SUPFAM" id="SSF53137">
    <property type="entry name" value="Translational machinery components"/>
    <property type="match status" value="1"/>
</dbReference>
<sequence>MDKKSARIRRATRARRKLKELGATRLVVHRTPRHIYAQVIAPNGSEVLVAASTVEKAIAEQLKYTGNKDAAAAVGKAVAERALEKGIKDVSFDRSGFQYHGRVQALADAAREAGLQF</sequence>
<name>RL18_SALCH</name>
<evidence type="ECO:0000255" key="1">
    <source>
        <dbReference type="HAMAP-Rule" id="MF_01337"/>
    </source>
</evidence>
<evidence type="ECO:0000305" key="2"/>
<feature type="chain" id="PRO_0000131334" description="Large ribosomal subunit protein uL18">
    <location>
        <begin position="1"/>
        <end position="117"/>
    </location>
</feature>
<gene>
    <name evidence="1" type="primary">rplR</name>
    <name type="ordered locus">SCH_3358</name>
</gene>
<keyword id="KW-0687">Ribonucleoprotein</keyword>
<keyword id="KW-0689">Ribosomal protein</keyword>
<keyword id="KW-0694">RNA-binding</keyword>
<keyword id="KW-0699">rRNA-binding</keyword>
<reference key="1">
    <citation type="journal article" date="2005" name="Nucleic Acids Res.">
        <title>The genome sequence of Salmonella enterica serovar Choleraesuis, a highly invasive and resistant zoonotic pathogen.</title>
        <authorList>
            <person name="Chiu C.-H."/>
            <person name="Tang P."/>
            <person name="Chu C."/>
            <person name="Hu S."/>
            <person name="Bao Q."/>
            <person name="Yu J."/>
            <person name="Chou Y.-Y."/>
            <person name="Wang H.-S."/>
            <person name="Lee Y.-S."/>
        </authorList>
    </citation>
    <scope>NUCLEOTIDE SEQUENCE [LARGE SCALE GENOMIC DNA]</scope>
    <source>
        <strain>SC-B67</strain>
    </source>
</reference>